<proteinExistence type="evidence at protein level"/>
<evidence type="ECO:0000256" key="1">
    <source>
        <dbReference type="SAM" id="MobiDB-lite"/>
    </source>
</evidence>
<evidence type="ECO:0000269" key="2">
    <source>
    </source>
</evidence>
<evidence type="ECO:0000269" key="3">
    <source>
    </source>
</evidence>
<evidence type="ECO:0000305" key="4"/>
<evidence type="ECO:0000312" key="5">
    <source>
        <dbReference type="HGNC" id="HGNC:24274"/>
    </source>
</evidence>
<evidence type="ECO:0007744" key="6">
    <source>
        <dbReference type="PDB" id="7MQ8"/>
    </source>
</evidence>
<evidence type="ECO:0007744" key="7">
    <source>
        <dbReference type="PDB" id="7MQ9"/>
    </source>
</evidence>
<evidence type="ECO:0007744" key="8">
    <source>
        <dbReference type="PDB" id="7MQA"/>
    </source>
</evidence>
<evidence type="ECO:0007744" key="9">
    <source>
    </source>
</evidence>
<evidence type="ECO:0007744" key="10">
    <source>
    </source>
</evidence>
<evidence type="ECO:0007744" key="11">
    <source>
    </source>
</evidence>
<evidence type="ECO:0007744" key="12">
    <source>
    </source>
</evidence>
<evidence type="ECO:0007744" key="13">
    <source>
    </source>
</evidence>
<evidence type="ECO:0007744" key="14">
    <source>
    </source>
</evidence>
<evidence type="ECO:0007744" key="15">
    <source>
    </source>
</evidence>
<evidence type="ECO:0007744" key="16">
    <source>
    </source>
</evidence>
<evidence type="ECO:0007744" key="17">
    <source>
    </source>
</evidence>
<evidence type="ECO:0007744" key="18">
    <source>
    </source>
</evidence>
<sequence>MPPERRRRMKLDRRTGAKPKRKPGMRPDWKAGAGPGGPPQKPAPSSQRKPPARPSAAAAAIAVAAAEEERRLRQRNRLRLEEDKPAVERCLEELVFGDVENDEDALLRRLRGPRVQEHEDSGDSEVENEAKGNFPPQKKPVWVDEEDEDEEMVDMMNNRFRKDMMKNASESKLSKDNLKKRLKEEFQHAMGGVPAWAETTKRKTSSDDESEEDEDDLLQRTGNFISTSTSLPRGILKMKNCQHANAERPTVARISSVQFHPGAQIVMVAGLDNAVSLFQVDGKTNPKIQSIYLERFPIFKACFSANGEEVLATSTHSKVLYVYDMLAGKLIPVHQVRGLKEKIVRSFEVSPDGSFLLINGIAGYLHLLAMKTKELIGSMKINGRVAASTFSSDSKKVYASSGDGEVYVWDVNSRKCLNRFVDEGSLYGLSIATSRNGQYVACGSNCGVVNIYNQDSCLQETNPKPIKAIMNLVTGVTSLTFNPTTEILAIASEKMKEAVRLVHLPSCTVFSNFPVIKNKNISHVHTMDFSPRSGYFALGNEKGKALMYRLHHYSDF</sequence>
<comment type="function">
    <text evidence="3">Part of the small subunit (SSU) processome, first precursor of the small eukaryotic ribosomal subunit. During the assembly of the SSU processome in the nucleolus, many ribosome biogenesis factors, an RNA chaperone and ribosomal proteins associate with the nascent pre-rRNA and work in concert to generate RNA folding, modifications, rearrangements and cleavage as well as targeted degradation of pre-ribosomal RNA by the RNA exosome. Involved in nucleolar processing of pre-18S ribosomal RNA.</text>
</comment>
<comment type="subunit">
    <text evidence="3">Part of the small subunit (SSU) processome, composed of more than 70 proteins and the RNA chaperone small nucleolar RNA (snoRNA) U3.</text>
</comment>
<comment type="interaction">
    <interactant intactId="EBI-592816">
        <id>Q9Y5J1</id>
    </interactant>
    <interactant intactId="EBI-722224">
        <id>Q15269</id>
        <label>PWP2</label>
    </interactant>
    <organismsDiffer>false</organismsDiffer>
    <experiments>2</experiments>
</comment>
<comment type="subcellular location">
    <subcellularLocation>
        <location evidence="2 3">Nucleus</location>
        <location evidence="2 3">Nucleolus</location>
    </subcellularLocation>
</comment>
<comment type="similarity">
    <text evidence="4">Belongs to the WD repeat UTP18 family.</text>
</comment>
<comment type="sequence caution" evidence="4">
    <conflict type="frameshift">
        <sequence resource="EMBL-CDS" id="AAD34043"/>
    </conflict>
</comment>
<comment type="sequence caution" evidence="4">
    <conflict type="erroneous initiation">
        <sequence resource="EMBL-CDS" id="AAG01999"/>
    </conflict>
</comment>
<protein>
    <recommendedName>
        <fullName>U3 small nucleolar RNA-associated protein 18 homolog</fullName>
    </recommendedName>
    <alternativeName>
        <fullName>WD repeat-containing protein 50</fullName>
    </alternativeName>
</protein>
<dbReference type="EMBL" id="AF151806">
    <property type="protein sequence ID" value="AAD34043.1"/>
    <property type="status" value="ALT_FRAME"/>
    <property type="molecule type" value="mRNA"/>
</dbReference>
<dbReference type="EMBL" id="BC025276">
    <property type="protein sequence ID" value="AAH25276.2"/>
    <property type="molecule type" value="mRNA"/>
</dbReference>
<dbReference type="EMBL" id="AY007138">
    <property type="protein sequence ID" value="AAG01999.1"/>
    <property type="status" value="ALT_INIT"/>
    <property type="molecule type" value="mRNA"/>
</dbReference>
<dbReference type="CCDS" id="CCDS42362.1"/>
<dbReference type="RefSeq" id="NP_057085.2">
    <property type="nucleotide sequence ID" value="NM_016001.3"/>
</dbReference>
<dbReference type="PDB" id="7MQ8">
    <property type="method" value="EM"/>
    <property type="resolution" value="3.60 A"/>
    <property type="chains" value="LS=1-556"/>
</dbReference>
<dbReference type="PDB" id="7MQ9">
    <property type="method" value="EM"/>
    <property type="resolution" value="3.87 A"/>
    <property type="chains" value="LS=1-556"/>
</dbReference>
<dbReference type="PDB" id="7MQA">
    <property type="method" value="EM"/>
    <property type="resolution" value="2.70 A"/>
    <property type="chains" value="LS=1-556"/>
</dbReference>
<dbReference type="PDBsum" id="7MQ8"/>
<dbReference type="PDBsum" id="7MQ9"/>
<dbReference type="PDBsum" id="7MQA"/>
<dbReference type="EMDB" id="EMD-23936"/>
<dbReference type="EMDB" id="EMD-23937"/>
<dbReference type="EMDB" id="EMD-23938"/>
<dbReference type="SMR" id="Q9Y5J1"/>
<dbReference type="BioGRID" id="119285">
    <property type="interactions" value="181"/>
</dbReference>
<dbReference type="ComplexPortal" id="CPX-2688">
    <property type="entry name" value="UTP-B complex"/>
</dbReference>
<dbReference type="FunCoup" id="Q9Y5J1">
    <property type="interactions" value="3819"/>
</dbReference>
<dbReference type="IntAct" id="Q9Y5J1">
    <property type="interactions" value="81"/>
</dbReference>
<dbReference type="MINT" id="Q9Y5J1"/>
<dbReference type="STRING" id="9606.ENSP00000225298"/>
<dbReference type="GlyGen" id="Q9Y5J1">
    <property type="glycosylation" value="1 site, 1 O-linked glycan (1 site)"/>
</dbReference>
<dbReference type="iPTMnet" id="Q9Y5J1"/>
<dbReference type="PhosphoSitePlus" id="Q9Y5J1"/>
<dbReference type="SwissPalm" id="Q9Y5J1"/>
<dbReference type="BioMuta" id="UTP18"/>
<dbReference type="DMDM" id="73920973"/>
<dbReference type="jPOST" id="Q9Y5J1"/>
<dbReference type="MassIVE" id="Q9Y5J1"/>
<dbReference type="PaxDb" id="9606-ENSP00000225298"/>
<dbReference type="PeptideAtlas" id="Q9Y5J1"/>
<dbReference type="ProteomicsDB" id="86417"/>
<dbReference type="Pumba" id="Q9Y5J1"/>
<dbReference type="Antibodypedia" id="30799">
    <property type="antibodies" value="77 antibodies from 19 providers"/>
</dbReference>
<dbReference type="DNASU" id="51096"/>
<dbReference type="Ensembl" id="ENST00000225298.12">
    <property type="protein sequence ID" value="ENSP00000225298.7"/>
    <property type="gene ID" value="ENSG00000011260.14"/>
</dbReference>
<dbReference type="GeneID" id="51096"/>
<dbReference type="KEGG" id="hsa:51096"/>
<dbReference type="MANE-Select" id="ENST00000225298.12">
    <property type="protein sequence ID" value="ENSP00000225298.7"/>
    <property type="RefSeq nucleotide sequence ID" value="NM_016001.3"/>
    <property type="RefSeq protein sequence ID" value="NP_057085.2"/>
</dbReference>
<dbReference type="UCSC" id="uc002its.4">
    <property type="organism name" value="human"/>
</dbReference>
<dbReference type="AGR" id="HGNC:24274"/>
<dbReference type="CTD" id="51096"/>
<dbReference type="DisGeNET" id="51096"/>
<dbReference type="GeneCards" id="UTP18"/>
<dbReference type="HGNC" id="HGNC:24274">
    <property type="gene designation" value="UTP18"/>
</dbReference>
<dbReference type="HPA" id="ENSG00000011260">
    <property type="expression patterns" value="Low tissue specificity"/>
</dbReference>
<dbReference type="MIM" id="612816">
    <property type="type" value="gene"/>
</dbReference>
<dbReference type="neXtProt" id="NX_Q9Y5J1"/>
<dbReference type="OpenTargets" id="ENSG00000011260"/>
<dbReference type="PharmGKB" id="PA134984104"/>
<dbReference type="VEuPathDB" id="HostDB:ENSG00000011260"/>
<dbReference type="eggNOG" id="KOG2055">
    <property type="taxonomic scope" value="Eukaryota"/>
</dbReference>
<dbReference type="GeneTree" id="ENSGT00440000033919"/>
<dbReference type="HOGENOM" id="CLU_011055_3_1_1"/>
<dbReference type="InParanoid" id="Q9Y5J1"/>
<dbReference type="OMA" id="DLNRATY"/>
<dbReference type="OrthoDB" id="1935146at2759"/>
<dbReference type="PAN-GO" id="Q9Y5J1">
    <property type="GO annotations" value="2 GO annotations based on evolutionary models"/>
</dbReference>
<dbReference type="PhylomeDB" id="Q9Y5J1"/>
<dbReference type="TreeFam" id="TF313426"/>
<dbReference type="PathwayCommons" id="Q9Y5J1"/>
<dbReference type="Reactome" id="R-HSA-6790901">
    <property type="pathway name" value="rRNA modification in the nucleus and cytosol"/>
</dbReference>
<dbReference type="Reactome" id="R-HSA-6791226">
    <property type="pathway name" value="Major pathway of rRNA processing in the nucleolus and cytosol"/>
</dbReference>
<dbReference type="SignaLink" id="Q9Y5J1"/>
<dbReference type="BioGRID-ORCS" id="51096">
    <property type="hits" value="660 hits in 1169 CRISPR screens"/>
</dbReference>
<dbReference type="CD-CODE" id="91857CE7">
    <property type="entry name" value="Nucleolus"/>
</dbReference>
<dbReference type="CD-CODE" id="DEE660B4">
    <property type="entry name" value="Stress granule"/>
</dbReference>
<dbReference type="ChiTaRS" id="UTP18">
    <property type="organism name" value="human"/>
</dbReference>
<dbReference type="GeneWiki" id="UTP18"/>
<dbReference type="GenomeRNAi" id="51096"/>
<dbReference type="Pharos" id="Q9Y5J1">
    <property type="development level" value="Tbio"/>
</dbReference>
<dbReference type="PRO" id="PR:Q9Y5J1"/>
<dbReference type="Proteomes" id="UP000005640">
    <property type="component" value="Chromosome 17"/>
</dbReference>
<dbReference type="RNAct" id="Q9Y5J1">
    <property type="molecule type" value="protein"/>
</dbReference>
<dbReference type="Bgee" id="ENSG00000011260">
    <property type="expression patterns" value="Expressed in right testis and 205 other cell types or tissues"/>
</dbReference>
<dbReference type="ExpressionAtlas" id="Q9Y5J1">
    <property type="expression patterns" value="baseline and differential"/>
</dbReference>
<dbReference type="GO" id="GO:0031965">
    <property type="term" value="C:nuclear membrane"/>
    <property type="evidence" value="ECO:0000314"/>
    <property type="project" value="HPA"/>
</dbReference>
<dbReference type="GO" id="GO:0005730">
    <property type="term" value="C:nucleolus"/>
    <property type="evidence" value="ECO:0000314"/>
    <property type="project" value="HPA"/>
</dbReference>
<dbReference type="GO" id="GO:0005654">
    <property type="term" value="C:nucleoplasm"/>
    <property type="evidence" value="ECO:0000314"/>
    <property type="project" value="HPA"/>
</dbReference>
<dbReference type="GO" id="GO:0005634">
    <property type="term" value="C:nucleus"/>
    <property type="evidence" value="ECO:0000314"/>
    <property type="project" value="UniProtKB"/>
</dbReference>
<dbReference type="GO" id="GO:0034388">
    <property type="term" value="C:Pwp2p-containing subcomplex of 90S preribosome"/>
    <property type="evidence" value="ECO:0000318"/>
    <property type="project" value="GO_Central"/>
</dbReference>
<dbReference type="GO" id="GO:0032040">
    <property type="term" value="C:small-subunit processome"/>
    <property type="evidence" value="ECO:0000314"/>
    <property type="project" value="UniProtKB"/>
</dbReference>
<dbReference type="GO" id="GO:0003723">
    <property type="term" value="F:RNA binding"/>
    <property type="evidence" value="ECO:0007005"/>
    <property type="project" value="UniProtKB"/>
</dbReference>
<dbReference type="GO" id="GO:0042274">
    <property type="term" value="P:ribosomal small subunit biogenesis"/>
    <property type="evidence" value="ECO:0000314"/>
    <property type="project" value="UniProtKB"/>
</dbReference>
<dbReference type="GO" id="GO:0006364">
    <property type="term" value="P:rRNA processing"/>
    <property type="evidence" value="ECO:0007669"/>
    <property type="project" value="UniProtKB-KW"/>
</dbReference>
<dbReference type="FunFam" id="2.130.10.10:FF:000121">
    <property type="entry name" value="U3 small nucleolar RNA-associated protein 18 homolog"/>
    <property type="match status" value="1"/>
</dbReference>
<dbReference type="Gene3D" id="2.130.10.10">
    <property type="entry name" value="YVTN repeat-like/Quinoprotein amine dehydrogenase"/>
    <property type="match status" value="1"/>
</dbReference>
<dbReference type="InterPro" id="IPR045161">
    <property type="entry name" value="Utp18"/>
</dbReference>
<dbReference type="InterPro" id="IPR015943">
    <property type="entry name" value="WD40/YVTN_repeat-like_dom_sf"/>
</dbReference>
<dbReference type="InterPro" id="IPR019775">
    <property type="entry name" value="WD40_repeat_CS"/>
</dbReference>
<dbReference type="InterPro" id="IPR036322">
    <property type="entry name" value="WD40_repeat_dom_sf"/>
</dbReference>
<dbReference type="InterPro" id="IPR001680">
    <property type="entry name" value="WD40_rpt"/>
</dbReference>
<dbReference type="PANTHER" id="PTHR18359:SF2">
    <property type="entry name" value="U3 SMALL NUCLEOLAR RNA-ASSOCIATED PROTEIN 18 HOMOLOG"/>
    <property type="match status" value="1"/>
</dbReference>
<dbReference type="PANTHER" id="PTHR18359">
    <property type="entry name" value="WD-REPEAT PROTEIN-RELATED"/>
    <property type="match status" value="1"/>
</dbReference>
<dbReference type="Pfam" id="PF00400">
    <property type="entry name" value="WD40"/>
    <property type="match status" value="1"/>
</dbReference>
<dbReference type="SMART" id="SM00320">
    <property type="entry name" value="WD40"/>
    <property type="match status" value="7"/>
</dbReference>
<dbReference type="SUPFAM" id="SSF50978">
    <property type="entry name" value="WD40 repeat-like"/>
    <property type="match status" value="1"/>
</dbReference>
<dbReference type="PROSITE" id="PS00678">
    <property type="entry name" value="WD_REPEATS_1"/>
    <property type="match status" value="1"/>
</dbReference>
<dbReference type="PROSITE" id="PS50082">
    <property type="entry name" value="WD_REPEATS_2"/>
    <property type="match status" value="1"/>
</dbReference>
<dbReference type="PROSITE" id="PS50294">
    <property type="entry name" value="WD_REPEATS_REGION"/>
    <property type="match status" value="1"/>
</dbReference>
<gene>
    <name evidence="5" type="primary">UTP18</name>
    <name type="synonym">WDR50</name>
    <name type="ORF">CDABP0061</name>
    <name type="ORF">CGI-48</name>
</gene>
<organism>
    <name type="scientific">Homo sapiens</name>
    <name type="common">Human</name>
    <dbReference type="NCBI Taxonomy" id="9606"/>
    <lineage>
        <taxon>Eukaryota</taxon>
        <taxon>Metazoa</taxon>
        <taxon>Chordata</taxon>
        <taxon>Craniata</taxon>
        <taxon>Vertebrata</taxon>
        <taxon>Euteleostomi</taxon>
        <taxon>Mammalia</taxon>
        <taxon>Eutheria</taxon>
        <taxon>Euarchontoglires</taxon>
        <taxon>Primates</taxon>
        <taxon>Haplorrhini</taxon>
        <taxon>Catarrhini</taxon>
        <taxon>Hominidae</taxon>
        <taxon>Homo</taxon>
    </lineage>
</organism>
<feature type="chain" id="PRO_0000051405" description="U3 small nucleolar RNA-associated protein 18 homolog">
    <location>
        <begin position="1"/>
        <end position="556"/>
    </location>
</feature>
<feature type="repeat" description="WD 1">
    <location>
        <begin position="249"/>
        <end position="288"/>
    </location>
</feature>
<feature type="repeat" description="WD 2">
    <location>
        <begin position="293"/>
        <end position="333"/>
    </location>
</feature>
<feature type="repeat" description="WD 3">
    <location>
        <begin position="339"/>
        <end position="380"/>
    </location>
</feature>
<feature type="repeat" description="WD 4">
    <location>
        <begin position="381"/>
        <end position="419"/>
    </location>
</feature>
<feature type="repeat" description="WD 5">
    <location>
        <begin position="421"/>
        <end position="462"/>
    </location>
</feature>
<feature type="repeat" description="WD 6">
    <location>
        <begin position="471"/>
        <end position="512"/>
    </location>
</feature>
<feature type="region of interest" description="Disordered" evidence="1">
    <location>
        <begin position="1"/>
        <end position="70"/>
    </location>
</feature>
<feature type="region of interest" description="Disordered" evidence="1">
    <location>
        <begin position="111"/>
        <end position="143"/>
    </location>
</feature>
<feature type="region of interest" description="Disordered" evidence="1">
    <location>
        <begin position="193"/>
        <end position="219"/>
    </location>
</feature>
<feature type="compositionally biased region" description="Basic residues" evidence="1">
    <location>
        <begin position="1"/>
        <end position="24"/>
    </location>
</feature>
<feature type="compositionally biased region" description="Low complexity" evidence="1">
    <location>
        <begin position="43"/>
        <end position="65"/>
    </location>
</feature>
<feature type="compositionally biased region" description="Acidic residues" evidence="1">
    <location>
        <begin position="207"/>
        <end position="216"/>
    </location>
</feature>
<feature type="modified residue" description="Phosphoserine" evidence="9 10 12 14 15 16 17">
    <location>
        <position position="121"/>
    </location>
</feature>
<feature type="modified residue" description="Phosphoserine" evidence="9 10 12 14 15 16 17">
    <location>
        <position position="124"/>
    </location>
</feature>
<feature type="modified residue" description="Phosphothreonine" evidence="11 15 17">
    <location>
        <position position="204"/>
    </location>
</feature>
<feature type="modified residue" description="Phosphoserine" evidence="11">
    <location>
        <position position="205"/>
    </location>
</feature>
<feature type="modified residue" description="Phosphoserine" evidence="11 13 15">
    <location>
        <position position="206"/>
    </location>
</feature>
<feature type="modified residue" description="Phosphoserine" evidence="11 13 14 15 16 17">
    <location>
        <position position="210"/>
    </location>
</feature>
<feature type="modified residue" description="Phosphothreonine" evidence="16">
    <location>
        <position position="221"/>
    </location>
</feature>
<feature type="cross-link" description="Glycyl lysine isopeptide (Lys-Gly) (interchain with G-Cter in SUMO2)" evidence="18">
    <location>
        <position position="84"/>
    </location>
</feature>
<feature type="cross-link" description="Glycyl lysine isopeptide (Lys-Gly) (interchain with G-Cter in SUMO2)" evidence="18">
    <location>
        <position position="183"/>
    </location>
</feature>
<feature type="cross-link" description="Glycyl lysine isopeptide (Lys-Gly) (interchain with G-Cter in SUMO2)" evidence="18">
    <location>
        <position position="201"/>
    </location>
</feature>
<feature type="cross-link" description="Glycyl lysine isopeptide (Lys-Gly) (interchain with G-Cter in SUMO2)" evidence="18">
    <location>
        <position position="517"/>
    </location>
</feature>
<feature type="sequence conflict" description="In Ref. 1; AAD34043." evidence="4" ref="1">
    <original>GKALMYRLHHYSDF</original>
    <variation>ARP</variation>
    <location>
        <begin position="543"/>
        <end position="556"/>
    </location>
</feature>
<reference key="1">
    <citation type="journal article" date="2000" name="Genome Res.">
        <title>Identification of novel human genes evolutionarily conserved in Caenorhabditis elegans by comparative proteomics.</title>
        <authorList>
            <person name="Lai C.-H."/>
            <person name="Chou C.-Y."/>
            <person name="Ch'ang L.-Y."/>
            <person name="Liu C.-S."/>
            <person name="Lin W.-C."/>
        </authorList>
    </citation>
    <scope>NUCLEOTIDE SEQUENCE [LARGE SCALE MRNA]</scope>
</reference>
<reference key="2">
    <citation type="journal article" date="2004" name="Genome Res.">
        <title>The status, quality, and expansion of the NIH full-length cDNA project: the Mammalian Gene Collection (MGC).</title>
        <authorList>
            <consortium name="The MGC Project Team"/>
        </authorList>
    </citation>
    <scope>NUCLEOTIDE SEQUENCE [LARGE SCALE MRNA]</scope>
    <source>
        <tissue>Skin</tissue>
    </source>
</reference>
<reference key="3">
    <citation type="submission" date="2000-07" db="EMBL/GenBank/DDBJ databases">
        <title>Pediatric leukemia cDNA sequencing project.</title>
        <authorList>
            <person name="Zhou J."/>
            <person name="Yu W."/>
            <person name="Tang H."/>
            <person name="Mei G."/>
            <person name="Tsang Y.T.M."/>
            <person name="Bouck J."/>
            <person name="Gibbs R.A."/>
            <person name="Margolin J.F."/>
        </authorList>
    </citation>
    <scope>NUCLEOTIDE SEQUENCE [LARGE SCALE MRNA] OF 162-556</scope>
    <source>
        <tissue>Leukemia</tissue>
    </source>
</reference>
<reference key="4">
    <citation type="journal article" date="2002" name="Mol. Biol. Cell">
        <title>Functional proteomic analysis of human nucleolus.</title>
        <authorList>
            <person name="Scherl A."/>
            <person name="Coute Y."/>
            <person name="Deon C."/>
            <person name="Calle A."/>
            <person name="Kindbeiter K."/>
            <person name="Sanchez J.-C."/>
            <person name="Greco A."/>
            <person name="Hochstrasser D.F."/>
            <person name="Diaz J.-J."/>
        </authorList>
    </citation>
    <scope>SUBCELLULAR LOCATION [LARGE SCALE ANALYSIS]</scope>
    <source>
        <tissue>Cervix carcinoma</tissue>
    </source>
</reference>
<reference key="5">
    <citation type="journal article" date="2006" name="Cell">
        <title>Global, in vivo, and site-specific phosphorylation dynamics in signaling networks.</title>
        <authorList>
            <person name="Olsen J.V."/>
            <person name="Blagoev B."/>
            <person name="Gnad F."/>
            <person name="Macek B."/>
            <person name="Kumar C."/>
            <person name="Mortensen P."/>
            <person name="Mann M."/>
        </authorList>
    </citation>
    <scope>PHOSPHORYLATION [LARGE SCALE ANALYSIS] AT SER-121 AND SER-124</scope>
    <scope>IDENTIFICATION BY MASS SPECTROMETRY [LARGE SCALE ANALYSIS]</scope>
    <source>
        <tissue>Cervix carcinoma</tissue>
    </source>
</reference>
<reference key="6">
    <citation type="journal article" date="2008" name="J. Proteome Res.">
        <title>Phosphorylation analysis of primary human T lymphocytes using sequential IMAC and titanium oxide enrichment.</title>
        <authorList>
            <person name="Carrascal M."/>
            <person name="Ovelleiro D."/>
            <person name="Casas V."/>
            <person name="Gay M."/>
            <person name="Abian J."/>
        </authorList>
    </citation>
    <scope>PHOSPHORYLATION [LARGE SCALE ANALYSIS] AT SER-121 AND SER-124</scope>
    <scope>IDENTIFICATION BY MASS SPECTROMETRY [LARGE SCALE ANALYSIS]</scope>
    <source>
        <tissue>T-cell</tissue>
    </source>
</reference>
<reference key="7">
    <citation type="journal article" date="2008" name="Proc. Natl. Acad. Sci. U.S.A.">
        <title>A quantitative atlas of mitotic phosphorylation.</title>
        <authorList>
            <person name="Dephoure N."/>
            <person name="Zhou C."/>
            <person name="Villen J."/>
            <person name="Beausoleil S.A."/>
            <person name="Bakalarski C.E."/>
            <person name="Elledge S.J."/>
            <person name="Gygi S.P."/>
        </authorList>
    </citation>
    <scope>PHOSPHORYLATION [LARGE SCALE ANALYSIS] AT THR-204; SER-205; SER-206 AND SER-210</scope>
    <scope>IDENTIFICATION BY MASS SPECTROMETRY [LARGE SCALE ANALYSIS]</scope>
    <source>
        <tissue>Cervix carcinoma</tissue>
    </source>
</reference>
<reference key="8">
    <citation type="journal article" date="2008" name="Proteomics">
        <title>Large-scale phosphoproteome analysis of human liver tissue by enrichment and fractionation of phosphopeptides with strong anion exchange chromatography.</title>
        <authorList>
            <person name="Han G."/>
            <person name="Ye M."/>
            <person name="Zhou H."/>
            <person name="Jiang X."/>
            <person name="Feng S."/>
            <person name="Jiang X."/>
            <person name="Tian R."/>
            <person name="Wan D."/>
            <person name="Zou H."/>
            <person name="Gu J."/>
        </authorList>
    </citation>
    <scope>PHOSPHORYLATION [LARGE SCALE ANALYSIS] AT SER-121 AND SER-124</scope>
    <scope>IDENTIFICATION BY MASS SPECTROMETRY [LARGE SCALE ANALYSIS]</scope>
    <source>
        <tissue>Liver</tissue>
    </source>
</reference>
<reference key="9">
    <citation type="journal article" date="2009" name="Anal. Chem.">
        <title>Lys-N and trypsin cover complementary parts of the phosphoproteome in a refined SCX-based approach.</title>
        <authorList>
            <person name="Gauci S."/>
            <person name="Helbig A.O."/>
            <person name="Slijper M."/>
            <person name="Krijgsveld J."/>
            <person name="Heck A.J."/>
            <person name="Mohammed S."/>
        </authorList>
    </citation>
    <scope>IDENTIFICATION BY MASS SPECTROMETRY [LARGE SCALE ANALYSIS]</scope>
</reference>
<reference key="10">
    <citation type="journal article" date="2009" name="Sci. Signal.">
        <title>Quantitative phosphoproteomic analysis of T cell receptor signaling reveals system-wide modulation of protein-protein interactions.</title>
        <authorList>
            <person name="Mayya V."/>
            <person name="Lundgren D.H."/>
            <person name="Hwang S.-I."/>
            <person name="Rezaul K."/>
            <person name="Wu L."/>
            <person name="Eng J.K."/>
            <person name="Rodionov V."/>
            <person name="Han D.K."/>
        </authorList>
    </citation>
    <scope>PHOSPHORYLATION [LARGE SCALE ANALYSIS] AT SER-206 AND SER-210</scope>
    <scope>IDENTIFICATION BY MASS SPECTROMETRY [LARGE SCALE ANALYSIS]</scope>
    <source>
        <tissue>Leukemic T-cell</tissue>
    </source>
</reference>
<reference key="11">
    <citation type="journal article" date="2010" name="Sci. Signal.">
        <title>Quantitative phosphoproteomics reveals widespread full phosphorylation site occupancy during mitosis.</title>
        <authorList>
            <person name="Olsen J.V."/>
            <person name="Vermeulen M."/>
            <person name="Santamaria A."/>
            <person name="Kumar C."/>
            <person name="Miller M.L."/>
            <person name="Jensen L.J."/>
            <person name="Gnad F."/>
            <person name="Cox J."/>
            <person name="Jensen T.S."/>
            <person name="Nigg E.A."/>
            <person name="Brunak S."/>
            <person name="Mann M."/>
        </authorList>
    </citation>
    <scope>PHOSPHORYLATION [LARGE SCALE ANALYSIS] AT SER-121; SER-124 AND SER-210</scope>
    <scope>IDENTIFICATION BY MASS SPECTROMETRY [LARGE SCALE ANALYSIS]</scope>
    <source>
        <tissue>Cervix carcinoma</tissue>
    </source>
</reference>
<reference key="12">
    <citation type="journal article" date="2011" name="Sci. Signal.">
        <title>System-wide temporal characterization of the proteome and phosphoproteome of human embryonic stem cell differentiation.</title>
        <authorList>
            <person name="Rigbolt K.T."/>
            <person name="Prokhorova T.A."/>
            <person name="Akimov V."/>
            <person name="Henningsen J."/>
            <person name="Johansen P.T."/>
            <person name="Kratchmarova I."/>
            <person name="Kassem M."/>
            <person name="Mann M."/>
            <person name="Olsen J.V."/>
            <person name="Blagoev B."/>
        </authorList>
    </citation>
    <scope>PHOSPHORYLATION [LARGE SCALE ANALYSIS] AT SER-121; SER-124; THR-204; SER-206 AND SER-210</scope>
    <scope>IDENTIFICATION BY MASS SPECTROMETRY [LARGE SCALE ANALYSIS]</scope>
</reference>
<reference key="13">
    <citation type="journal article" date="2013" name="J. Proteome Res.">
        <title>Toward a comprehensive characterization of a human cancer cell phosphoproteome.</title>
        <authorList>
            <person name="Zhou H."/>
            <person name="Di Palma S."/>
            <person name="Preisinger C."/>
            <person name="Peng M."/>
            <person name="Polat A.N."/>
            <person name="Heck A.J."/>
            <person name="Mohammed S."/>
        </authorList>
    </citation>
    <scope>PHOSPHORYLATION [LARGE SCALE ANALYSIS] AT SER-121; SER-124; SER-210 AND THR-221</scope>
    <scope>IDENTIFICATION BY MASS SPECTROMETRY [LARGE SCALE ANALYSIS]</scope>
    <source>
        <tissue>Cervix carcinoma</tissue>
        <tissue>Erythroleukemia</tissue>
    </source>
</reference>
<reference key="14">
    <citation type="journal article" date="2014" name="J. Proteomics">
        <title>An enzyme assisted RP-RPLC approach for in-depth analysis of human liver phosphoproteome.</title>
        <authorList>
            <person name="Bian Y."/>
            <person name="Song C."/>
            <person name="Cheng K."/>
            <person name="Dong M."/>
            <person name="Wang F."/>
            <person name="Huang J."/>
            <person name="Sun D."/>
            <person name="Wang L."/>
            <person name="Ye M."/>
            <person name="Zou H."/>
        </authorList>
    </citation>
    <scope>PHOSPHORYLATION [LARGE SCALE ANALYSIS] AT SER-121; SER-124; THR-204 AND SER-210</scope>
    <scope>IDENTIFICATION BY MASS SPECTROMETRY [LARGE SCALE ANALYSIS]</scope>
    <source>
        <tissue>Liver</tissue>
    </source>
</reference>
<reference key="15">
    <citation type="journal article" date="2017" name="Nat. Struct. Mol. Biol.">
        <title>Site-specific mapping of the human SUMO proteome reveals co-modification with phosphorylation.</title>
        <authorList>
            <person name="Hendriks I.A."/>
            <person name="Lyon D."/>
            <person name="Young C."/>
            <person name="Jensen L.J."/>
            <person name="Vertegaal A.C."/>
            <person name="Nielsen M.L."/>
        </authorList>
    </citation>
    <scope>SUMOYLATION [LARGE SCALE ANALYSIS] AT LYS-84; LYS-183; LYS-201 AND LYS-517</scope>
    <scope>IDENTIFICATION BY MASS SPECTROMETRY [LARGE SCALE ANALYSIS]</scope>
</reference>
<reference evidence="6 7 8" key="16">
    <citation type="journal article" date="2021" name="Science">
        <title>Nucleolar maturation of the human small subunit processome.</title>
        <authorList>
            <person name="Singh S."/>
            <person name="Vanden Broeck A."/>
            <person name="Miller L."/>
            <person name="Chaker-Margot M."/>
            <person name="Klinge S."/>
        </authorList>
    </citation>
    <scope>STRUCTURE BY ELECTRON MICROSCOPY (2.70 ANGSTROMS)</scope>
    <scope>FUNCTION</scope>
    <scope>SUBUNIT</scope>
    <scope>SUBCELLULAR LOCATION</scope>
</reference>
<keyword id="KW-0002">3D-structure</keyword>
<keyword id="KW-1017">Isopeptide bond</keyword>
<keyword id="KW-0539">Nucleus</keyword>
<keyword id="KW-0597">Phosphoprotein</keyword>
<keyword id="KW-1267">Proteomics identification</keyword>
<keyword id="KW-1185">Reference proteome</keyword>
<keyword id="KW-0677">Repeat</keyword>
<keyword id="KW-0698">rRNA processing</keyword>
<keyword id="KW-0832">Ubl conjugation</keyword>
<keyword id="KW-0853">WD repeat</keyword>
<accession>Q9Y5J1</accession>
<accession>Q9H4N6</accession>
<name>UTP18_HUMAN</name>